<dbReference type="EC" id="1.4.4.2" evidence="1"/>
<dbReference type="EMBL" id="CP000001">
    <property type="protein sequence ID" value="AAU16288.1"/>
    <property type="molecule type" value="Genomic_DNA"/>
</dbReference>
<dbReference type="RefSeq" id="WP_000903231.1">
    <property type="nucleotide sequence ID" value="NZ_CP009968.1"/>
</dbReference>
<dbReference type="SMR" id="Q634V7"/>
<dbReference type="GeneID" id="93006874"/>
<dbReference type="KEGG" id="bcz:BCE33L3980"/>
<dbReference type="PATRIC" id="fig|288681.22.peg.1416"/>
<dbReference type="Proteomes" id="UP000002612">
    <property type="component" value="Chromosome"/>
</dbReference>
<dbReference type="GO" id="GO:0004375">
    <property type="term" value="F:glycine dehydrogenase (decarboxylating) activity"/>
    <property type="evidence" value="ECO:0007669"/>
    <property type="project" value="UniProtKB-EC"/>
</dbReference>
<dbReference type="GO" id="GO:0019464">
    <property type="term" value="P:glycine decarboxylation via glycine cleavage system"/>
    <property type="evidence" value="ECO:0007669"/>
    <property type="project" value="UniProtKB-UniRule"/>
</dbReference>
<dbReference type="GO" id="GO:0009116">
    <property type="term" value="P:nucleoside metabolic process"/>
    <property type="evidence" value="ECO:0007669"/>
    <property type="project" value="InterPro"/>
</dbReference>
<dbReference type="CDD" id="cd00613">
    <property type="entry name" value="GDC-P"/>
    <property type="match status" value="1"/>
</dbReference>
<dbReference type="FunFam" id="3.40.640.10:FF:000113">
    <property type="entry name" value="Probable glycine dehydrogenase (decarboxylating) subunit 1"/>
    <property type="match status" value="1"/>
</dbReference>
<dbReference type="Gene3D" id="3.90.1150.10">
    <property type="entry name" value="Aspartate Aminotransferase, domain 1"/>
    <property type="match status" value="1"/>
</dbReference>
<dbReference type="Gene3D" id="3.40.640.10">
    <property type="entry name" value="Type I PLP-dependent aspartate aminotransferase-like (Major domain)"/>
    <property type="match status" value="1"/>
</dbReference>
<dbReference type="HAMAP" id="MF_00712">
    <property type="entry name" value="GcvPA"/>
    <property type="match status" value="1"/>
</dbReference>
<dbReference type="InterPro" id="IPR023010">
    <property type="entry name" value="GcvPA"/>
</dbReference>
<dbReference type="InterPro" id="IPR049315">
    <property type="entry name" value="GDC-P_N"/>
</dbReference>
<dbReference type="InterPro" id="IPR020581">
    <property type="entry name" value="GDC_P"/>
</dbReference>
<dbReference type="InterPro" id="IPR015424">
    <property type="entry name" value="PyrdxlP-dep_Trfase"/>
</dbReference>
<dbReference type="InterPro" id="IPR015421">
    <property type="entry name" value="PyrdxlP-dep_Trfase_major"/>
</dbReference>
<dbReference type="InterPro" id="IPR015422">
    <property type="entry name" value="PyrdxlP-dep_Trfase_small"/>
</dbReference>
<dbReference type="NCBIfam" id="NF001696">
    <property type="entry name" value="PRK00451.1"/>
    <property type="match status" value="1"/>
</dbReference>
<dbReference type="PANTHER" id="PTHR42806">
    <property type="entry name" value="GLYCINE CLEAVAGE SYSTEM P-PROTEIN"/>
    <property type="match status" value="1"/>
</dbReference>
<dbReference type="PANTHER" id="PTHR42806:SF1">
    <property type="entry name" value="GLYCINE DEHYDROGENASE (DECARBOXYLATING)"/>
    <property type="match status" value="1"/>
</dbReference>
<dbReference type="Pfam" id="PF02347">
    <property type="entry name" value="GDC-P"/>
    <property type="match status" value="1"/>
</dbReference>
<dbReference type="PIRSF" id="PIRSF006815">
    <property type="entry name" value="GcvPA"/>
    <property type="match status" value="1"/>
</dbReference>
<dbReference type="SUPFAM" id="SSF53383">
    <property type="entry name" value="PLP-dependent transferases"/>
    <property type="match status" value="1"/>
</dbReference>
<name>GCSPA_BACCZ</name>
<reference key="1">
    <citation type="journal article" date="2006" name="J. Bacteriol.">
        <title>Pathogenomic sequence analysis of Bacillus cereus and Bacillus thuringiensis isolates closely related to Bacillus anthracis.</title>
        <authorList>
            <person name="Han C.S."/>
            <person name="Xie G."/>
            <person name="Challacombe J.F."/>
            <person name="Altherr M.R."/>
            <person name="Bhotika S.S."/>
            <person name="Bruce D."/>
            <person name="Campbell C.S."/>
            <person name="Campbell M.L."/>
            <person name="Chen J."/>
            <person name="Chertkov O."/>
            <person name="Cleland C."/>
            <person name="Dimitrijevic M."/>
            <person name="Doggett N.A."/>
            <person name="Fawcett J.J."/>
            <person name="Glavina T."/>
            <person name="Goodwin L.A."/>
            <person name="Hill K.K."/>
            <person name="Hitchcock P."/>
            <person name="Jackson P.J."/>
            <person name="Keim P."/>
            <person name="Kewalramani A.R."/>
            <person name="Longmire J."/>
            <person name="Lucas S."/>
            <person name="Malfatti S."/>
            <person name="McMurry K."/>
            <person name="Meincke L.J."/>
            <person name="Misra M."/>
            <person name="Moseman B.L."/>
            <person name="Mundt M."/>
            <person name="Munk A.C."/>
            <person name="Okinaka R.T."/>
            <person name="Parson-Quintana B."/>
            <person name="Reilly L.P."/>
            <person name="Richardson P."/>
            <person name="Robinson D.L."/>
            <person name="Rubin E."/>
            <person name="Saunders E."/>
            <person name="Tapia R."/>
            <person name="Tesmer J.G."/>
            <person name="Thayer N."/>
            <person name="Thompson L.S."/>
            <person name="Tice H."/>
            <person name="Ticknor L.O."/>
            <person name="Wills P.L."/>
            <person name="Brettin T.S."/>
            <person name="Gilna P."/>
        </authorList>
    </citation>
    <scope>NUCLEOTIDE SEQUENCE [LARGE SCALE GENOMIC DNA]</scope>
    <source>
        <strain>ZK / E33L</strain>
    </source>
</reference>
<evidence type="ECO:0000255" key="1">
    <source>
        <dbReference type="HAMAP-Rule" id="MF_00712"/>
    </source>
</evidence>
<comment type="function">
    <text evidence="1">The glycine cleavage system catalyzes the degradation of glycine. The P protein binds the alpha-amino group of glycine through its pyridoxal phosphate cofactor; CO(2) is released and the remaining methylamine moiety is then transferred to the lipoamide cofactor of the H protein.</text>
</comment>
<comment type="catalytic activity">
    <reaction evidence="1">
        <text>N(6)-[(R)-lipoyl]-L-lysyl-[glycine-cleavage complex H protein] + glycine + H(+) = N(6)-[(R)-S(8)-aminomethyldihydrolipoyl]-L-lysyl-[glycine-cleavage complex H protein] + CO2</text>
        <dbReference type="Rhea" id="RHEA:24304"/>
        <dbReference type="Rhea" id="RHEA-COMP:10494"/>
        <dbReference type="Rhea" id="RHEA-COMP:10495"/>
        <dbReference type="ChEBI" id="CHEBI:15378"/>
        <dbReference type="ChEBI" id="CHEBI:16526"/>
        <dbReference type="ChEBI" id="CHEBI:57305"/>
        <dbReference type="ChEBI" id="CHEBI:83099"/>
        <dbReference type="ChEBI" id="CHEBI:83143"/>
        <dbReference type="EC" id="1.4.4.2"/>
    </reaction>
</comment>
<comment type="subunit">
    <text evidence="1">The glycine cleavage system is composed of four proteins: P, T, L and H. In this organism, the P 'protein' is a heterodimer of two subunits.</text>
</comment>
<comment type="similarity">
    <text evidence="1">Belongs to the GcvP family. N-terminal subunit subfamily.</text>
</comment>
<accession>Q634V7</accession>
<feature type="chain" id="PRO_0000166957" description="Probable glycine dehydrogenase (decarboxylating) subunit 1">
    <location>
        <begin position="1"/>
        <end position="447"/>
    </location>
</feature>
<sequence>MLHRYLPMTEEDKKEMLQTIGVQTIDELFSDIPESVRFKGDLKIKEAKSEPELLKELSQMASKNANLKEYASFLGAGVYDHYAPVIVDHVISRSEFYTAYTPYQPEISQGELQAIFEFQTMICELTGMDVANSSMYDGGTALAEAAMLAAGHTRKKKILVSSAVHPESRAVLETYAKGQHLEVVEINHKDGVTDLDVLQSEVDDTVACVIVQYPNFFGQVEKLADIEKIVHQQKSLFIVSSNPLSLGALTPPGKFGADIVIGDAQPFGIPTQFGGPHCGYFATTKAFMRKIPGRLVGQTVDSDGKRGFVLTLQAREQHIRRDKATSNICSNQALNALAASVAMTALGKQGVKEMARQNISKAQYAKRQFEAKGFTVTFAGPFFNEFVVDCKRPVKEVNDALLQKNIIGGYDLGRDYKEHENHMLVAVTELRTKEEIDTLVNEMGAIQ</sequence>
<organism>
    <name type="scientific">Bacillus cereus (strain ZK / E33L)</name>
    <dbReference type="NCBI Taxonomy" id="288681"/>
    <lineage>
        <taxon>Bacteria</taxon>
        <taxon>Bacillati</taxon>
        <taxon>Bacillota</taxon>
        <taxon>Bacilli</taxon>
        <taxon>Bacillales</taxon>
        <taxon>Bacillaceae</taxon>
        <taxon>Bacillus</taxon>
        <taxon>Bacillus cereus group</taxon>
    </lineage>
</organism>
<gene>
    <name evidence="1" type="primary">gcvPA</name>
    <name type="ordered locus">BCE33L3980</name>
</gene>
<proteinExistence type="inferred from homology"/>
<protein>
    <recommendedName>
        <fullName evidence="1">Probable glycine dehydrogenase (decarboxylating) subunit 1</fullName>
        <ecNumber evidence="1">1.4.4.2</ecNumber>
    </recommendedName>
    <alternativeName>
        <fullName evidence="1">Glycine cleavage system P-protein subunit 1</fullName>
    </alternativeName>
    <alternativeName>
        <fullName evidence="1">Glycine decarboxylase subunit 1</fullName>
    </alternativeName>
    <alternativeName>
        <fullName evidence="1">Glycine dehydrogenase (aminomethyl-transferring) subunit 1</fullName>
    </alternativeName>
</protein>
<keyword id="KW-0560">Oxidoreductase</keyword>